<reference key="1">
    <citation type="journal article" date="1998" name="Science">
        <title>Genome sequence of the nematode C. elegans: a platform for investigating biology.</title>
        <authorList>
            <consortium name="The C. elegans sequencing consortium"/>
        </authorList>
    </citation>
    <scope>NUCLEOTIDE SEQUENCE [LARGE SCALE GENOMIC DNA]</scope>
    <source>
        <strain>Bristol N2</strain>
    </source>
</reference>
<proteinExistence type="evidence at protein level"/>
<gene>
    <name type="primary">rps-28</name>
    <name type="ORF">Y41D4B.5</name>
</gene>
<accession>Q95Y04</accession>
<sequence length="65" mass="7437">MDKLTLARVTKVIGRTGSQGQCTQVRVEFINDQNNRSIIRNVKGPVREGDILTLLESEREARRLR</sequence>
<evidence type="ECO:0000250" key="1">
    <source>
        <dbReference type="UniProtKB" id="P62857"/>
    </source>
</evidence>
<evidence type="ECO:0000250" key="2">
    <source>
        <dbReference type="UniProtKB" id="Q6QAT1"/>
    </source>
</evidence>
<evidence type="ECO:0000305" key="3"/>
<comment type="subunit">
    <text evidence="2">Component of the 40S small ribosomal subunit.</text>
</comment>
<comment type="subcellular location">
    <subcellularLocation>
        <location evidence="1">Cytoplasm</location>
        <location evidence="1">Cytosol</location>
    </subcellularLocation>
    <subcellularLocation>
        <location evidence="1">Cytoplasm</location>
    </subcellularLocation>
    <subcellularLocation>
        <location evidence="2">Rough endoplasmic reticulum</location>
    </subcellularLocation>
    <text evidence="1 2">Detected on cytosolic polysomes (By similarity). Detected in ribosomes that are associated with the rough endoplasmic reticulum (By similarity).</text>
</comment>
<comment type="similarity">
    <text evidence="3">Belongs to the eukaryotic ribosomal protein eS28 family.</text>
</comment>
<feature type="chain" id="PRO_0000136828" description="Small ribosomal subunit protein eS28">
    <location>
        <begin position="1"/>
        <end position="65"/>
    </location>
</feature>
<name>RS28_CAEEL</name>
<protein>
    <recommendedName>
        <fullName evidence="3">Small ribosomal subunit protein eS28</fullName>
    </recommendedName>
    <alternativeName>
        <fullName>40S ribosomal protein S28</fullName>
    </alternativeName>
</protein>
<organism>
    <name type="scientific">Caenorhabditis elegans</name>
    <dbReference type="NCBI Taxonomy" id="6239"/>
    <lineage>
        <taxon>Eukaryota</taxon>
        <taxon>Metazoa</taxon>
        <taxon>Ecdysozoa</taxon>
        <taxon>Nematoda</taxon>
        <taxon>Chromadorea</taxon>
        <taxon>Rhabditida</taxon>
        <taxon>Rhabditina</taxon>
        <taxon>Rhabditomorpha</taxon>
        <taxon>Rhabditoidea</taxon>
        <taxon>Rhabditidae</taxon>
        <taxon>Peloderinae</taxon>
        <taxon>Caenorhabditis</taxon>
    </lineage>
</organism>
<dbReference type="EMBL" id="FO080782">
    <property type="protein sequence ID" value="CCD66705.1"/>
    <property type="molecule type" value="Genomic_DNA"/>
</dbReference>
<dbReference type="RefSeq" id="NP_001370541.1">
    <property type="nucleotide sequence ID" value="NM_001383043.2"/>
</dbReference>
<dbReference type="RefSeq" id="NP_500115.1">
    <property type="nucleotide sequence ID" value="NM_067714.4"/>
</dbReference>
<dbReference type="PDB" id="9BH5">
    <property type="method" value="EM"/>
    <property type="resolution" value="2.63 A"/>
    <property type="chains" value="Ac=1-65"/>
</dbReference>
<dbReference type="PDB" id="9CAI">
    <property type="method" value="EM"/>
    <property type="resolution" value="2.59 A"/>
    <property type="chains" value="Ac=1-65"/>
</dbReference>
<dbReference type="PDBsum" id="9BH5"/>
<dbReference type="PDBsum" id="9CAI"/>
<dbReference type="EMDB" id="EMD-44533"/>
<dbReference type="EMDB" id="EMD-45392"/>
<dbReference type="SMR" id="Q95Y04"/>
<dbReference type="BioGRID" id="42131">
    <property type="interactions" value="87"/>
</dbReference>
<dbReference type="FunCoup" id="Q95Y04">
    <property type="interactions" value="1394"/>
</dbReference>
<dbReference type="STRING" id="6239.Y41D4B.5.1"/>
<dbReference type="PaxDb" id="6239-Y41D4B.5"/>
<dbReference type="PeptideAtlas" id="Q95Y04"/>
<dbReference type="EnsemblMetazoa" id="Y41D4B.5.1">
    <property type="protein sequence ID" value="Y41D4B.5.1"/>
    <property type="gene ID" value="WBGene00004497"/>
</dbReference>
<dbReference type="GeneID" id="176975"/>
<dbReference type="UCSC" id="Y41D4B.5.1">
    <property type="organism name" value="c. elegans"/>
</dbReference>
<dbReference type="AGR" id="WB:WBGene00004497"/>
<dbReference type="WormBase" id="Y41D4B.5">
    <property type="protein sequence ID" value="CE21842"/>
    <property type="gene ID" value="WBGene00004497"/>
    <property type="gene designation" value="rps-28"/>
</dbReference>
<dbReference type="eggNOG" id="KOG3502">
    <property type="taxonomic scope" value="Eukaryota"/>
</dbReference>
<dbReference type="GeneTree" id="ENSGT00910000144227"/>
<dbReference type="HOGENOM" id="CLU_178987_1_0_1"/>
<dbReference type="InParanoid" id="Q95Y04"/>
<dbReference type="OMA" id="SCSIIHN"/>
<dbReference type="OrthoDB" id="10258930at2759"/>
<dbReference type="PhylomeDB" id="Q95Y04"/>
<dbReference type="Reactome" id="R-CEL-156827">
    <property type="pathway name" value="L13a-mediated translational silencing of Ceruloplasmin expression"/>
</dbReference>
<dbReference type="Reactome" id="R-CEL-1799339">
    <property type="pathway name" value="SRP-dependent cotranslational protein targeting to membrane"/>
</dbReference>
<dbReference type="Reactome" id="R-CEL-72649">
    <property type="pathway name" value="Translation initiation complex formation"/>
</dbReference>
<dbReference type="Reactome" id="R-CEL-72689">
    <property type="pathway name" value="Formation of a pool of free 40S subunits"/>
</dbReference>
<dbReference type="Reactome" id="R-CEL-72695">
    <property type="pathway name" value="Formation of the ternary complex, and subsequently, the 43S complex"/>
</dbReference>
<dbReference type="Reactome" id="R-CEL-72702">
    <property type="pathway name" value="Ribosomal scanning and start codon recognition"/>
</dbReference>
<dbReference type="Reactome" id="R-CEL-72706">
    <property type="pathway name" value="GTP hydrolysis and joining of the 60S ribosomal subunit"/>
</dbReference>
<dbReference type="Reactome" id="R-CEL-975956">
    <property type="pathway name" value="Nonsense Mediated Decay (NMD) independent of the Exon Junction Complex (EJC)"/>
</dbReference>
<dbReference type="Reactome" id="R-CEL-975957">
    <property type="pathway name" value="Nonsense Mediated Decay (NMD) enhanced by the Exon Junction Complex (EJC)"/>
</dbReference>
<dbReference type="PRO" id="PR:Q95Y04"/>
<dbReference type="Proteomes" id="UP000001940">
    <property type="component" value="Chromosome IV"/>
</dbReference>
<dbReference type="Bgee" id="WBGene00004497">
    <property type="expression patterns" value="Expressed in larva and 4 other cell types or tissues"/>
</dbReference>
<dbReference type="GO" id="GO:0098556">
    <property type="term" value="C:cytoplasmic side of rough endoplasmic reticulum membrane"/>
    <property type="evidence" value="ECO:0000250"/>
    <property type="project" value="UniProtKB"/>
</dbReference>
<dbReference type="GO" id="GO:0022627">
    <property type="term" value="C:cytosolic small ribosomal subunit"/>
    <property type="evidence" value="ECO:0000250"/>
    <property type="project" value="UniProtKB"/>
</dbReference>
<dbReference type="GO" id="GO:0005840">
    <property type="term" value="C:ribosome"/>
    <property type="evidence" value="ECO:0000250"/>
    <property type="project" value="UniProtKB"/>
</dbReference>
<dbReference type="GO" id="GO:0003735">
    <property type="term" value="F:structural constituent of ribosome"/>
    <property type="evidence" value="ECO:0000318"/>
    <property type="project" value="GO_Central"/>
</dbReference>
<dbReference type="GO" id="GO:0002181">
    <property type="term" value="P:cytoplasmic translation"/>
    <property type="evidence" value="ECO:0000250"/>
    <property type="project" value="UniProtKB"/>
</dbReference>
<dbReference type="GO" id="GO:0030490">
    <property type="term" value="P:maturation of SSU-rRNA"/>
    <property type="evidence" value="ECO:0000318"/>
    <property type="project" value="GO_Central"/>
</dbReference>
<dbReference type="GO" id="GO:0000028">
    <property type="term" value="P:ribosomal small subunit assembly"/>
    <property type="evidence" value="ECO:0000318"/>
    <property type="project" value="GO_Central"/>
</dbReference>
<dbReference type="CDD" id="cd04457">
    <property type="entry name" value="S1_S28E"/>
    <property type="match status" value="1"/>
</dbReference>
<dbReference type="FunFam" id="2.40.50.140:FF:000025">
    <property type="entry name" value="40S ribosomal protein S28"/>
    <property type="match status" value="1"/>
</dbReference>
<dbReference type="Gene3D" id="2.40.50.140">
    <property type="entry name" value="Nucleic acid-binding proteins"/>
    <property type="match status" value="1"/>
</dbReference>
<dbReference type="HAMAP" id="MF_00292">
    <property type="entry name" value="Ribosomal_eS28"/>
    <property type="match status" value="1"/>
</dbReference>
<dbReference type="InterPro" id="IPR012340">
    <property type="entry name" value="NA-bd_OB-fold"/>
</dbReference>
<dbReference type="InterPro" id="IPR000289">
    <property type="entry name" value="Ribosomal_eS28"/>
</dbReference>
<dbReference type="InterPro" id="IPR028626">
    <property type="entry name" value="Ribosomal_eS28_CS"/>
</dbReference>
<dbReference type="PANTHER" id="PTHR10769">
    <property type="entry name" value="40S RIBOSOMAL PROTEIN S28"/>
    <property type="match status" value="1"/>
</dbReference>
<dbReference type="PANTHER" id="PTHR10769:SF3">
    <property type="entry name" value="SMALL RIBOSOMAL SUBUNIT PROTEIN ES28"/>
    <property type="match status" value="1"/>
</dbReference>
<dbReference type="Pfam" id="PF01200">
    <property type="entry name" value="Ribosomal_S28e"/>
    <property type="match status" value="1"/>
</dbReference>
<dbReference type="SUPFAM" id="SSF50249">
    <property type="entry name" value="Nucleic acid-binding proteins"/>
    <property type="match status" value="1"/>
</dbReference>
<dbReference type="PROSITE" id="PS00961">
    <property type="entry name" value="RIBOSOMAL_S28E"/>
    <property type="match status" value="1"/>
</dbReference>
<keyword id="KW-0002">3D-structure</keyword>
<keyword id="KW-0963">Cytoplasm</keyword>
<keyword id="KW-0256">Endoplasmic reticulum</keyword>
<keyword id="KW-1185">Reference proteome</keyword>
<keyword id="KW-0687">Ribonucleoprotein</keyword>
<keyword id="KW-0689">Ribosomal protein</keyword>